<reference key="1">
    <citation type="submission" date="2004-11" db="EMBL/GenBank/DDBJ databases">
        <authorList>
            <consortium name="The German cDNA consortium"/>
        </authorList>
    </citation>
    <scope>NUCLEOTIDE SEQUENCE [LARGE SCALE MRNA]</scope>
    <source>
        <tissue>Brain cortex</tissue>
    </source>
</reference>
<name>CRIP2_PONAB</name>
<dbReference type="EMBL" id="CR859977">
    <property type="protein sequence ID" value="CAH92129.1"/>
    <property type="molecule type" value="mRNA"/>
</dbReference>
<dbReference type="RefSeq" id="NP_001126244.1">
    <property type="nucleotide sequence ID" value="NM_001132772.2"/>
</dbReference>
<dbReference type="FunCoup" id="Q5R7Y1">
    <property type="interactions" value="108"/>
</dbReference>
<dbReference type="GeneID" id="100173215"/>
<dbReference type="KEGG" id="pon:100173215"/>
<dbReference type="CTD" id="1397"/>
<dbReference type="InParanoid" id="Q5R7Y1"/>
<dbReference type="OrthoDB" id="1679758at2759"/>
<dbReference type="Proteomes" id="UP000001595">
    <property type="component" value="Unplaced"/>
</dbReference>
<dbReference type="GO" id="GO:0046872">
    <property type="term" value="F:metal ion binding"/>
    <property type="evidence" value="ECO:0007669"/>
    <property type="project" value="UniProtKB-KW"/>
</dbReference>
<dbReference type="CDD" id="cd09476">
    <property type="entry name" value="LIM1_TLP"/>
    <property type="match status" value="1"/>
</dbReference>
<dbReference type="FunFam" id="2.10.110.10:FF:000025">
    <property type="entry name" value="Cysteine-rich protein 2"/>
    <property type="match status" value="2"/>
</dbReference>
<dbReference type="Gene3D" id="2.10.110.10">
    <property type="entry name" value="Cysteine Rich Protein"/>
    <property type="match status" value="2"/>
</dbReference>
<dbReference type="InterPro" id="IPR001781">
    <property type="entry name" value="Znf_LIM"/>
</dbReference>
<dbReference type="PANTHER" id="PTHR46074:SF2">
    <property type="entry name" value="CYSTEINE-RICH PROTEIN 2"/>
    <property type="match status" value="1"/>
</dbReference>
<dbReference type="PANTHER" id="PTHR46074">
    <property type="entry name" value="CYSTEINE-RICH PROTEIN CRIP FAMILY MEMBER"/>
    <property type="match status" value="1"/>
</dbReference>
<dbReference type="Pfam" id="PF00412">
    <property type="entry name" value="LIM"/>
    <property type="match status" value="2"/>
</dbReference>
<dbReference type="SMART" id="SM00132">
    <property type="entry name" value="LIM"/>
    <property type="match status" value="2"/>
</dbReference>
<dbReference type="SUPFAM" id="SSF57716">
    <property type="entry name" value="Glucocorticoid receptor-like (DNA-binding domain)"/>
    <property type="match status" value="4"/>
</dbReference>
<dbReference type="PROSITE" id="PS00478">
    <property type="entry name" value="LIM_DOMAIN_1"/>
    <property type="match status" value="2"/>
</dbReference>
<dbReference type="PROSITE" id="PS50023">
    <property type="entry name" value="LIM_DOMAIN_2"/>
    <property type="match status" value="2"/>
</dbReference>
<comment type="subunit">
    <text evidence="1">Interacts with TGFB1I1.</text>
</comment>
<feature type="chain" id="PRO_0000075712" description="Cysteine-rich protein 2">
    <location>
        <begin position="1"/>
        <end position="208"/>
    </location>
</feature>
<feature type="domain" description="LIM zinc-binding 1" evidence="4">
    <location>
        <begin position="5"/>
        <end position="57"/>
    </location>
</feature>
<feature type="domain" description="LIM zinc-binding 2" evidence="4">
    <location>
        <begin position="126"/>
        <end position="178"/>
    </location>
</feature>
<feature type="region of interest" description="Disordered" evidence="5">
    <location>
        <begin position="98"/>
        <end position="119"/>
    </location>
</feature>
<feature type="modified residue" description="N6-acetyllysine" evidence="3">
    <location>
        <position position="23"/>
    </location>
</feature>
<feature type="modified residue" description="Phosphoserine" evidence="2">
    <location>
        <position position="104"/>
    </location>
</feature>
<feature type="modified residue" description="N6-acetyllysine" evidence="2">
    <location>
        <position position="138"/>
    </location>
</feature>
<feature type="modified residue" description="N6-acetyllysine" evidence="3">
    <location>
        <position position="144"/>
    </location>
</feature>
<keyword id="KW-0007">Acetylation</keyword>
<keyword id="KW-0440">LIM domain</keyword>
<keyword id="KW-0479">Metal-binding</keyword>
<keyword id="KW-0597">Phosphoprotein</keyword>
<keyword id="KW-1185">Reference proteome</keyword>
<keyword id="KW-0677">Repeat</keyword>
<keyword id="KW-0862">Zinc</keyword>
<evidence type="ECO:0000250" key="1"/>
<evidence type="ECO:0000250" key="2">
    <source>
        <dbReference type="UniProtKB" id="P52943"/>
    </source>
</evidence>
<evidence type="ECO:0000250" key="3">
    <source>
        <dbReference type="UniProtKB" id="Q9DCT8"/>
    </source>
</evidence>
<evidence type="ECO:0000255" key="4">
    <source>
        <dbReference type="PROSITE-ProRule" id="PRU00125"/>
    </source>
</evidence>
<evidence type="ECO:0000256" key="5">
    <source>
        <dbReference type="SAM" id="MobiDB-lite"/>
    </source>
</evidence>
<sequence>MASKCPKCDKTVCFAEKVSSLGKDWHKFCLKCERCSKTLTPGGHAEHDGKPFCHKPCYATLFGPKGVNIGGAGSYIYEKPLAEGPQVTGPIEVPAARAEERKASGPPKGPSRASSVTTFTGEPNTCPRCSKKVYFAEKVTSLGKDWHRPCLHCERCGKTLTPGGHAEHDGQPYCHKPCYGILFGPKGVNTGAVGSYIYDRDPEGKVQP</sequence>
<protein>
    <recommendedName>
        <fullName>Cysteine-rich protein 2</fullName>
        <shortName>CRP-2</shortName>
    </recommendedName>
</protein>
<accession>Q5R7Y1</accession>
<gene>
    <name type="primary">CRIP2</name>
</gene>
<proteinExistence type="evidence at transcript level"/>
<organism>
    <name type="scientific">Pongo abelii</name>
    <name type="common">Sumatran orangutan</name>
    <name type="synonym">Pongo pygmaeus abelii</name>
    <dbReference type="NCBI Taxonomy" id="9601"/>
    <lineage>
        <taxon>Eukaryota</taxon>
        <taxon>Metazoa</taxon>
        <taxon>Chordata</taxon>
        <taxon>Craniata</taxon>
        <taxon>Vertebrata</taxon>
        <taxon>Euteleostomi</taxon>
        <taxon>Mammalia</taxon>
        <taxon>Eutheria</taxon>
        <taxon>Euarchontoglires</taxon>
        <taxon>Primates</taxon>
        <taxon>Haplorrhini</taxon>
        <taxon>Catarrhini</taxon>
        <taxon>Hominidae</taxon>
        <taxon>Pongo</taxon>
    </lineage>
</organism>